<sequence>MDQDYRARLVYPFSGAISPHADIVDQATLAWAAMFGLLTDSLRHKSRRLQYGLLAARAYPRADREMLQIAADWIAWLFFMDDQCDETGIGRDLQRMIALHERFLAILDGATPEAHDCALTYALADLRRRLALRAPDNWLRRFSEHVRLYFTANRWETVNRQRGATPNVATYCAARLFSGAVYACFDLIELAEQIELPFYARHHSIVQQLEQAANNIICWCNDVLSYPKEMQHGDRHNLVLVIQGEHQCSLPEAIDRALDLHAREVATFVRKRTCVPYFDAAVNTALEKYVTGLQFWICANRDWSLTATRYAPTHKSQEMVMAVAQQ</sequence>
<keyword id="KW-0456">Lyase</keyword>
<keyword id="KW-0460">Magnesium</keyword>
<keyword id="KW-0479">Metal-binding</keyword>
<keyword id="KW-1185">Reference proteome</keyword>
<dbReference type="EC" id="4.2.3.98" evidence="2 3 4"/>
<dbReference type="EMBL" id="CP000804">
    <property type="protein sequence ID" value="ABU56748.1"/>
    <property type="molecule type" value="Genomic_DNA"/>
</dbReference>
<dbReference type="RefSeq" id="WP_012119179.1">
    <property type="nucleotide sequence ID" value="NC_009767.1"/>
</dbReference>
<dbReference type="SMR" id="A7NH01"/>
<dbReference type="STRING" id="383372.Rcas_0622"/>
<dbReference type="KEGG" id="rca:Rcas_0622"/>
<dbReference type="eggNOG" id="COG0664">
    <property type="taxonomic scope" value="Bacteria"/>
</dbReference>
<dbReference type="HOGENOM" id="CLU_042538_4_2_0"/>
<dbReference type="OrthoDB" id="2989600at2"/>
<dbReference type="UniPathway" id="UPA00213"/>
<dbReference type="Proteomes" id="UP000000263">
    <property type="component" value="Chromosome"/>
</dbReference>
<dbReference type="GO" id="GO:0046872">
    <property type="term" value="F:metal ion binding"/>
    <property type="evidence" value="ECO:0007669"/>
    <property type="project" value="UniProtKB-KW"/>
</dbReference>
<dbReference type="GO" id="GO:0010333">
    <property type="term" value="F:terpene synthase activity"/>
    <property type="evidence" value="ECO:0007669"/>
    <property type="project" value="InterPro"/>
</dbReference>
<dbReference type="GO" id="GO:0016114">
    <property type="term" value="P:terpenoid biosynthetic process"/>
    <property type="evidence" value="ECO:0007669"/>
    <property type="project" value="UniProtKB-UniPathway"/>
</dbReference>
<dbReference type="Gene3D" id="1.10.600.10">
    <property type="entry name" value="Farnesyl Diphosphate Synthase"/>
    <property type="match status" value="1"/>
</dbReference>
<dbReference type="InterPro" id="IPR008949">
    <property type="entry name" value="Isoprenoid_synthase_dom_sf"/>
</dbReference>
<dbReference type="InterPro" id="IPR034686">
    <property type="entry name" value="Terpene_cyclase-like_2"/>
</dbReference>
<dbReference type="PANTHER" id="PTHR35201:SF4">
    <property type="entry name" value="BETA-PINACENE SYNTHASE-RELATED"/>
    <property type="match status" value="1"/>
</dbReference>
<dbReference type="PANTHER" id="PTHR35201">
    <property type="entry name" value="TERPENE SYNTHASE"/>
    <property type="match status" value="1"/>
</dbReference>
<dbReference type="Pfam" id="PF19086">
    <property type="entry name" value="Terpene_syn_C_2"/>
    <property type="match status" value="1"/>
</dbReference>
<dbReference type="SFLD" id="SFLDS00005">
    <property type="entry name" value="Isoprenoid_Synthase_Type_I"/>
    <property type="match status" value="1"/>
</dbReference>
<dbReference type="SFLD" id="SFLDG01020">
    <property type="entry name" value="Terpene_Cyclase_Like_2"/>
    <property type="match status" value="1"/>
</dbReference>
<dbReference type="SUPFAM" id="SSF48576">
    <property type="entry name" value="Terpenoid synthases"/>
    <property type="match status" value="1"/>
</dbReference>
<accession>A7NH01</accession>
<feature type="chain" id="PRO_0000443244" description="(+)-T-muurolol synthase ((2E,6E)-farnesyl diphosphate cyclizing)">
    <location>
        <begin position="1"/>
        <end position="326"/>
    </location>
</feature>
<feature type="short sequence motif" description="DDXXD motif" evidence="7">
    <location>
        <begin position="81"/>
        <end position="85"/>
    </location>
</feature>
<feature type="binding site" evidence="1">
    <location>
        <position position="81"/>
    </location>
    <ligand>
        <name>Mg(2+)</name>
        <dbReference type="ChEBI" id="CHEBI:18420"/>
        <label>1</label>
    </ligand>
</feature>
<feature type="binding site" evidence="1">
    <location>
        <position position="85"/>
    </location>
    <ligand>
        <name>Mg(2+)</name>
        <dbReference type="ChEBI" id="CHEBI:18420"/>
        <label>1</label>
    </ligand>
</feature>
<feature type="binding site" evidence="1">
    <location>
        <position position="85"/>
    </location>
    <ligand>
        <name>Mg(2+)</name>
        <dbReference type="ChEBI" id="CHEBI:18420"/>
        <label>2</label>
    </ligand>
</feature>
<feature type="binding site" evidence="1">
    <location>
        <position position="175"/>
    </location>
    <ligand>
        <name>substrate</name>
    </ligand>
</feature>
<feature type="binding site" evidence="1">
    <location>
        <position position="221"/>
    </location>
    <ligand>
        <name>Mg(2+)</name>
        <dbReference type="ChEBI" id="CHEBI:18420"/>
        <label>3</label>
    </ligand>
</feature>
<feature type="binding site" evidence="1">
    <location>
        <position position="225"/>
    </location>
    <ligand>
        <name>Mg(2+)</name>
        <dbReference type="ChEBI" id="CHEBI:18420"/>
        <label>3</label>
    </ligand>
</feature>
<feature type="binding site" evidence="1">
    <location>
        <position position="228"/>
    </location>
    <ligand>
        <name>substrate</name>
    </ligand>
</feature>
<feature type="binding site" evidence="1">
    <location>
        <position position="229"/>
    </location>
    <ligand>
        <name>Mg(2+)</name>
        <dbReference type="ChEBI" id="CHEBI:18420"/>
        <label>3</label>
    </ligand>
</feature>
<feature type="binding site" evidence="1">
    <location>
        <begin position="309"/>
        <end position="310"/>
    </location>
    <ligand>
        <name>substrate</name>
    </ligand>
</feature>
<feature type="site" description="Plays a critical role in the stabilization of intermediate cation" evidence="1">
    <location>
        <position position="78"/>
    </location>
</feature>
<feature type="site" description="Plays a critical role for substrate recognition" evidence="1">
    <location>
        <position position="82"/>
    </location>
</feature>
<feature type="site" description="Plays a critical role for substrate recognition" evidence="1">
    <location>
        <position position="156"/>
    </location>
</feature>
<feature type="site" description="Plays a critical role for abstraction of the pyrophosphate group" evidence="1">
    <location>
        <position position="179"/>
    </location>
</feature>
<comment type="function">
    <text evidence="2 3 4">Catalyzes the conversion of (2E,6E)-farnesyl diphosphate (FPP) into (+)-T-muurolol via a 1,10-cyclization, which requires isomerization of FPP to nerolidyl diphosphate (NPP) and then abstraction of the pyrophosphate from intermediate NPP leading to a (E,Z)-germacradienyl (helminthogermacradienyl) cation.</text>
</comment>
<comment type="catalytic activity">
    <reaction evidence="2 3 4">
        <text>(2E,6E)-farnesyl diphosphate + H2O = (+)-T-muurolol + diphosphate</text>
        <dbReference type="Rhea" id="RHEA:32011"/>
        <dbReference type="ChEBI" id="CHEBI:15377"/>
        <dbReference type="ChEBI" id="CHEBI:33019"/>
        <dbReference type="ChEBI" id="CHEBI:63704"/>
        <dbReference type="ChEBI" id="CHEBI:175763"/>
        <dbReference type="EC" id="4.2.3.98"/>
    </reaction>
</comment>
<comment type="cofactor">
    <cofactor evidence="1">
        <name>Mg(2+)</name>
        <dbReference type="ChEBI" id="CHEBI:18420"/>
    </cofactor>
    <text evidence="1">Binds 3 Mg(2+) ions per subunit.</text>
</comment>
<comment type="pathway">
    <text evidence="7">Secondary metabolite biosynthesis; terpenoid biosynthesis.</text>
</comment>
<comment type="domain">
    <text evidence="7">The Asp-Asp-Xaa-Xaa-Asp (DDXXD) motif is important for the catalytic activity, presumably through binding to Mg(2+).</text>
</comment>
<comment type="similarity">
    <text evidence="6">Belongs to the terpene synthase family.</text>
</comment>
<protein>
    <recommendedName>
        <fullName evidence="5">(+)-T-muurolol synthase ((2E,6E)-farnesyl diphosphate cyclizing)</fullName>
        <ecNumber evidence="2 3 4">4.2.3.98</ecNumber>
    </recommendedName>
    <alternativeName>
        <fullName evidence="5">Terpene cyclase</fullName>
    </alternativeName>
    <alternativeName>
        <fullName evidence="5">Type I terpene cyclase</fullName>
    </alternativeName>
</protein>
<organism>
    <name type="scientific">Roseiflexus castenholzii (strain DSM 13941 / HLO8)</name>
    <dbReference type="NCBI Taxonomy" id="383372"/>
    <lineage>
        <taxon>Bacteria</taxon>
        <taxon>Bacillati</taxon>
        <taxon>Chloroflexota</taxon>
        <taxon>Chloroflexia</taxon>
        <taxon>Chloroflexales</taxon>
        <taxon>Roseiflexineae</taxon>
        <taxon>Roseiflexaceae</taxon>
        <taxon>Roseiflexus</taxon>
    </lineage>
</organism>
<proteinExistence type="evidence at protein level"/>
<gene>
    <name evidence="8" type="ordered locus">Rcas_0622</name>
</gene>
<name>TMUUS_ROSCS</name>
<reference key="1">
    <citation type="submission" date="2007-08" db="EMBL/GenBank/DDBJ databases">
        <title>Complete sequence of Roseiflexus castenholzii DSM 13941.</title>
        <authorList>
            <consortium name="US DOE Joint Genome Institute"/>
            <person name="Copeland A."/>
            <person name="Lucas S."/>
            <person name="Lapidus A."/>
            <person name="Barry K."/>
            <person name="Glavina del Rio T."/>
            <person name="Dalin E."/>
            <person name="Tice H."/>
            <person name="Pitluck S."/>
            <person name="Thompson L.S."/>
            <person name="Brettin T."/>
            <person name="Bruce D."/>
            <person name="Detter J.C."/>
            <person name="Han C."/>
            <person name="Tapia R."/>
            <person name="Schmutz J."/>
            <person name="Larimer F."/>
            <person name="Land M."/>
            <person name="Hauser L."/>
            <person name="Kyrpides N."/>
            <person name="Mikhailova N."/>
            <person name="Bryant D.A."/>
            <person name="Hanada S."/>
            <person name="Tsukatani Y."/>
            <person name="Richardson P."/>
        </authorList>
    </citation>
    <scope>NUCLEOTIDE SEQUENCE [LARGE SCALE GENOMIC DNA]</scope>
    <source>
        <strain evidence="9">DSM 13941 / HLO8</strain>
    </source>
</reference>
<reference key="2">
    <citation type="journal article" date="2013" name="Angew. Chem. Int. Ed.">
        <title>Rapid chemical characterization of bacterial terpene synthases.</title>
        <authorList>
            <person name="Rabe P."/>
            <person name="Dickschat J.S."/>
        </authorList>
    </citation>
    <scope>FUNCTION</scope>
    <scope>CATALYTIC ACTIVITY</scope>
    <source>
        <strain>DSM 13941 / HLO8</strain>
    </source>
</reference>
<reference key="3">
    <citation type="journal article" date="2016" name="Angew. Chem. Int. Ed.">
        <title>Lessons from 1,3-hydride shifts in sesquiterpene cyclizations.</title>
        <authorList>
            <person name="Rinkel J."/>
            <person name="Rabe P."/>
            <person name="Garbeva P."/>
            <person name="Dickschat J.S."/>
        </authorList>
    </citation>
    <scope>FUNCTION</scope>
    <scope>CATALYTIC ACTIVITY</scope>
    <scope>REACTION MECHANISM</scope>
    <source>
        <strain>DSM 13941 / HLO8</strain>
    </source>
</reference>
<reference key="4">
    <citation type="journal article" date="2016" name="Beilstein J. Org. Chem.">
        <title>Mechanistic investigations on six bacterial terpene cyclases.</title>
        <authorList>
            <person name="Rabe P."/>
            <person name="Schmitz T."/>
            <person name="Dickschat J.S."/>
        </authorList>
    </citation>
    <scope>FUNCTION</scope>
    <scope>CATALYTIC ACTIVITY</scope>
    <scope>DOMAIN</scope>
    <scope>PATHWAY</scope>
    <source>
        <strain>DSM 13941 / HLO8</strain>
    </source>
</reference>
<evidence type="ECO:0000250" key="1">
    <source>
        <dbReference type="UniProtKB" id="B5HDJ6"/>
    </source>
</evidence>
<evidence type="ECO:0000269" key="2">
    <source>
    </source>
</evidence>
<evidence type="ECO:0000269" key="3">
    <source>
    </source>
</evidence>
<evidence type="ECO:0000269" key="4">
    <source>
    </source>
</evidence>
<evidence type="ECO:0000303" key="5">
    <source>
    </source>
</evidence>
<evidence type="ECO:0000305" key="6"/>
<evidence type="ECO:0000305" key="7">
    <source>
    </source>
</evidence>
<evidence type="ECO:0000312" key="8">
    <source>
        <dbReference type="EMBL" id="ABU56748.1"/>
    </source>
</evidence>
<evidence type="ECO:0000312" key="9">
    <source>
        <dbReference type="Proteomes" id="UP000000263"/>
    </source>
</evidence>